<keyword id="KW-0030">Aminoacyl-tRNA synthetase</keyword>
<keyword id="KW-0067">ATP-binding</keyword>
<keyword id="KW-0963">Cytoplasm</keyword>
<keyword id="KW-0436">Ligase</keyword>
<keyword id="KW-0547">Nucleotide-binding</keyword>
<keyword id="KW-0648">Protein biosynthesis</keyword>
<accession>B7IUH7</accession>
<organism>
    <name type="scientific">Bacillus cereus (strain G9842)</name>
    <dbReference type="NCBI Taxonomy" id="405531"/>
    <lineage>
        <taxon>Bacteria</taxon>
        <taxon>Bacillati</taxon>
        <taxon>Bacillota</taxon>
        <taxon>Bacilli</taxon>
        <taxon>Bacillales</taxon>
        <taxon>Bacillaceae</taxon>
        <taxon>Bacillus</taxon>
        <taxon>Bacillus cereus group</taxon>
    </lineage>
</organism>
<comment type="function">
    <text evidence="1">Catalyzes the attachment of proline to tRNA(Pro) in a two-step reaction: proline is first activated by ATP to form Pro-AMP and then transferred to the acceptor end of tRNA(Pro). As ProRS can inadvertently accommodate and process non-cognate amino acids such as alanine and cysteine, to avoid such errors it has two additional distinct editing activities against alanine. One activity is designated as 'pretransfer' editing and involves the tRNA(Pro)-independent hydrolysis of activated Ala-AMP. The other activity is designated 'posttransfer' editing and involves deacylation of mischarged Ala-tRNA(Pro). The misacylated Cys-tRNA(Pro) is not edited by ProRS.</text>
</comment>
<comment type="catalytic activity">
    <reaction evidence="1">
        <text>tRNA(Pro) + L-proline + ATP = L-prolyl-tRNA(Pro) + AMP + diphosphate</text>
        <dbReference type="Rhea" id="RHEA:14305"/>
        <dbReference type="Rhea" id="RHEA-COMP:9700"/>
        <dbReference type="Rhea" id="RHEA-COMP:9702"/>
        <dbReference type="ChEBI" id="CHEBI:30616"/>
        <dbReference type="ChEBI" id="CHEBI:33019"/>
        <dbReference type="ChEBI" id="CHEBI:60039"/>
        <dbReference type="ChEBI" id="CHEBI:78442"/>
        <dbReference type="ChEBI" id="CHEBI:78532"/>
        <dbReference type="ChEBI" id="CHEBI:456215"/>
        <dbReference type="EC" id="6.1.1.15"/>
    </reaction>
</comment>
<comment type="subunit">
    <text evidence="1">Homodimer.</text>
</comment>
<comment type="subcellular location">
    <subcellularLocation>
        <location evidence="1">Cytoplasm</location>
    </subcellularLocation>
</comment>
<comment type="domain">
    <text evidence="1">Consists of three domains: the N-terminal catalytic domain, the editing domain and the C-terminal anticodon-binding domain.</text>
</comment>
<comment type="similarity">
    <text evidence="1">Belongs to the class-II aminoacyl-tRNA synthetase family. ProS type 1 subfamily.</text>
</comment>
<evidence type="ECO:0000255" key="1">
    <source>
        <dbReference type="HAMAP-Rule" id="MF_01569"/>
    </source>
</evidence>
<gene>
    <name evidence="1" type="primary">proS</name>
    <name type="ordered locus">BCG9842_B1327</name>
</gene>
<name>SYP_BACC2</name>
<proteinExistence type="inferred from homology"/>
<protein>
    <recommendedName>
        <fullName evidence="1">Proline--tRNA ligase</fullName>
        <ecNumber evidence="1">6.1.1.15</ecNumber>
    </recommendedName>
    <alternativeName>
        <fullName evidence="1">Prolyl-tRNA synthetase</fullName>
        <shortName evidence="1">ProRS</shortName>
    </alternativeName>
</protein>
<sequence length="566" mass="63125">MKQSMVFSPTLREVPADAEIKSHQLLLRAGFMRQNASGIYSFLPFGLKVLHKVERIVREEMERAGAVELLMPAMQAAELWQESGRWYSYGSELMRMKDRNAREFALGATHEEVITDLVRDEIKSYKKLPLTLYQIQTKFRDEQRPRFGLLRGREFLMKDAYSFHATQESLDEVYDRLYKAYSNIFARCGLNFRAVIADSGAMGGKDTHEFMVLSDVGEDTIAYSDTSDYAANIEMAPVVATYTKSDEAEMALEKVATPDQKAIEEVSAFLNIEADKCIKSMVFKVDEKLVVVLVRGDHEVNDVKVKNVYGASVVELASHEEVKELLNCEVGSLGPIGVTGDIEIIADHAVASIVNGCSGANEEGFHYVNVNPERDFKVSQYTDLRFIQEGDQSPDGNGTILFARGIEVGHVFKLGTRYSEAMNATFLDENGKTQPLIMGCYGIGVSRTVAAIAEQFNDENGLVWPKAVAPFHVHVIPVNMKSDAQREMGENIYNSLQEKGYEVLLDDRAERAGVKFADADLFGLPVRVTVGKKADEGIVEVKVRATGESEEVKVEELQTYIANILK</sequence>
<feature type="chain" id="PRO_1000199354" description="Proline--tRNA ligase">
    <location>
        <begin position="1"/>
        <end position="566"/>
    </location>
</feature>
<dbReference type="EC" id="6.1.1.15" evidence="1"/>
<dbReference type="EMBL" id="CP001186">
    <property type="protein sequence ID" value="ACK96244.1"/>
    <property type="molecule type" value="Genomic_DNA"/>
</dbReference>
<dbReference type="RefSeq" id="WP_000814295.1">
    <property type="nucleotide sequence ID" value="NC_011772.1"/>
</dbReference>
<dbReference type="SMR" id="B7IUH7"/>
<dbReference type="KEGG" id="bcg:BCG9842_B1327"/>
<dbReference type="HOGENOM" id="CLU_016739_0_0_9"/>
<dbReference type="Proteomes" id="UP000006744">
    <property type="component" value="Chromosome"/>
</dbReference>
<dbReference type="GO" id="GO:0005829">
    <property type="term" value="C:cytosol"/>
    <property type="evidence" value="ECO:0007669"/>
    <property type="project" value="TreeGrafter"/>
</dbReference>
<dbReference type="GO" id="GO:0002161">
    <property type="term" value="F:aminoacyl-tRNA deacylase activity"/>
    <property type="evidence" value="ECO:0007669"/>
    <property type="project" value="InterPro"/>
</dbReference>
<dbReference type="GO" id="GO:0005524">
    <property type="term" value="F:ATP binding"/>
    <property type="evidence" value="ECO:0007669"/>
    <property type="project" value="UniProtKB-UniRule"/>
</dbReference>
<dbReference type="GO" id="GO:0140096">
    <property type="term" value="F:catalytic activity, acting on a protein"/>
    <property type="evidence" value="ECO:0007669"/>
    <property type="project" value="UniProtKB-ARBA"/>
</dbReference>
<dbReference type="GO" id="GO:0004827">
    <property type="term" value="F:proline-tRNA ligase activity"/>
    <property type="evidence" value="ECO:0007669"/>
    <property type="project" value="UniProtKB-UniRule"/>
</dbReference>
<dbReference type="GO" id="GO:0016740">
    <property type="term" value="F:transferase activity"/>
    <property type="evidence" value="ECO:0007669"/>
    <property type="project" value="UniProtKB-ARBA"/>
</dbReference>
<dbReference type="GO" id="GO:0006433">
    <property type="term" value="P:prolyl-tRNA aminoacylation"/>
    <property type="evidence" value="ECO:0007669"/>
    <property type="project" value="UniProtKB-UniRule"/>
</dbReference>
<dbReference type="CDD" id="cd04334">
    <property type="entry name" value="ProRS-INS"/>
    <property type="match status" value="1"/>
</dbReference>
<dbReference type="CDD" id="cd00861">
    <property type="entry name" value="ProRS_anticodon_short"/>
    <property type="match status" value="1"/>
</dbReference>
<dbReference type="CDD" id="cd00779">
    <property type="entry name" value="ProRS_core_prok"/>
    <property type="match status" value="1"/>
</dbReference>
<dbReference type="FunFam" id="3.30.930.10:FF:000043">
    <property type="entry name" value="Proline--tRNA ligase"/>
    <property type="match status" value="1"/>
</dbReference>
<dbReference type="FunFam" id="3.30.930.10:FF:000065">
    <property type="entry name" value="Proline--tRNA ligase"/>
    <property type="match status" value="1"/>
</dbReference>
<dbReference type="FunFam" id="3.40.50.800:FF:000011">
    <property type="entry name" value="Proline--tRNA ligase"/>
    <property type="match status" value="1"/>
</dbReference>
<dbReference type="Gene3D" id="3.40.50.800">
    <property type="entry name" value="Anticodon-binding domain"/>
    <property type="match status" value="1"/>
</dbReference>
<dbReference type="Gene3D" id="3.30.930.10">
    <property type="entry name" value="Bira Bifunctional Protein, Domain 2"/>
    <property type="match status" value="2"/>
</dbReference>
<dbReference type="HAMAP" id="MF_01569">
    <property type="entry name" value="Pro_tRNA_synth_type1"/>
    <property type="match status" value="1"/>
</dbReference>
<dbReference type="InterPro" id="IPR002314">
    <property type="entry name" value="aa-tRNA-synt_IIb"/>
</dbReference>
<dbReference type="InterPro" id="IPR006195">
    <property type="entry name" value="aa-tRNA-synth_II"/>
</dbReference>
<dbReference type="InterPro" id="IPR045864">
    <property type="entry name" value="aa-tRNA-synth_II/BPL/LPL"/>
</dbReference>
<dbReference type="InterPro" id="IPR004154">
    <property type="entry name" value="Anticodon-bd"/>
</dbReference>
<dbReference type="InterPro" id="IPR036621">
    <property type="entry name" value="Anticodon-bd_dom_sf"/>
</dbReference>
<dbReference type="InterPro" id="IPR002316">
    <property type="entry name" value="Pro-tRNA-ligase_IIa"/>
</dbReference>
<dbReference type="InterPro" id="IPR004500">
    <property type="entry name" value="Pro-tRNA-synth_IIa_bac-type"/>
</dbReference>
<dbReference type="InterPro" id="IPR023717">
    <property type="entry name" value="Pro-tRNA-Synthase_IIa_type1"/>
</dbReference>
<dbReference type="InterPro" id="IPR050062">
    <property type="entry name" value="Pro-tRNA_synthetase"/>
</dbReference>
<dbReference type="InterPro" id="IPR044140">
    <property type="entry name" value="ProRS_anticodon_short"/>
</dbReference>
<dbReference type="InterPro" id="IPR033730">
    <property type="entry name" value="ProRS_core_prok"/>
</dbReference>
<dbReference type="InterPro" id="IPR036754">
    <property type="entry name" value="YbaK/aa-tRNA-synt-asso_dom_sf"/>
</dbReference>
<dbReference type="InterPro" id="IPR007214">
    <property type="entry name" value="YbaK/aa-tRNA-synth-assoc-dom"/>
</dbReference>
<dbReference type="NCBIfam" id="NF006625">
    <property type="entry name" value="PRK09194.1"/>
    <property type="match status" value="1"/>
</dbReference>
<dbReference type="NCBIfam" id="TIGR00409">
    <property type="entry name" value="proS_fam_II"/>
    <property type="match status" value="1"/>
</dbReference>
<dbReference type="PANTHER" id="PTHR42753">
    <property type="entry name" value="MITOCHONDRIAL RIBOSOME PROTEIN L39/PROLYL-TRNA LIGASE FAMILY MEMBER"/>
    <property type="match status" value="1"/>
</dbReference>
<dbReference type="PANTHER" id="PTHR42753:SF2">
    <property type="entry name" value="PROLINE--TRNA LIGASE"/>
    <property type="match status" value="1"/>
</dbReference>
<dbReference type="Pfam" id="PF03129">
    <property type="entry name" value="HGTP_anticodon"/>
    <property type="match status" value="1"/>
</dbReference>
<dbReference type="Pfam" id="PF00587">
    <property type="entry name" value="tRNA-synt_2b"/>
    <property type="match status" value="1"/>
</dbReference>
<dbReference type="Pfam" id="PF04073">
    <property type="entry name" value="tRNA_edit"/>
    <property type="match status" value="1"/>
</dbReference>
<dbReference type="PIRSF" id="PIRSF001535">
    <property type="entry name" value="ProRS_1"/>
    <property type="match status" value="1"/>
</dbReference>
<dbReference type="PRINTS" id="PR01046">
    <property type="entry name" value="TRNASYNTHPRO"/>
</dbReference>
<dbReference type="SUPFAM" id="SSF52954">
    <property type="entry name" value="Class II aaRS ABD-related"/>
    <property type="match status" value="1"/>
</dbReference>
<dbReference type="SUPFAM" id="SSF55681">
    <property type="entry name" value="Class II aaRS and biotin synthetases"/>
    <property type="match status" value="1"/>
</dbReference>
<dbReference type="SUPFAM" id="SSF55826">
    <property type="entry name" value="YbaK/ProRS associated domain"/>
    <property type="match status" value="1"/>
</dbReference>
<dbReference type="PROSITE" id="PS50862">
    <property type="entry name" value="AA_TRNA_LIGASE_II"/>
    <property type="match status" value="1"/>
</dbReference>
<reference key="1">
    <citation type="submission" date="2008-10" db="EMBL/GenBank/DDBJ databases">
        <title>Genome sequence of Bacillus cereus G9842.</title>
        <authorList>
            <person name="Dodson R.J."/>
            <person name="Durkin A.S."/>
            <person name="Rosovitz M.J."/>
            <person name="Rasko D.A."/>
            <person name="Hoffmaster A."/>
            <person name="Ravel J."/>
            <person name="Sutton G."/>
        </authorList>
    </citation>
    <scope>NUCLEOTIDE SEQUENCE [LARGE SCALE GENOMIC DNA]</scope>
    <source>
        <strain>G9842</strain>
    </source>
</reference>